<sequence>MTDKTFLVEIGTEELPPKALRNLAESFAANFTAELDAANLAHGEVSWFAAPRRLALKVARLSASQPDREVEKRGPAIAQAFDAEGKTTKAAEGWARGCGITVEQAERLTTDKGEWLLYRAHAKGEQAQALLAGMISTALSKLPIPKLMRWSDKETQFVRPVHTVTMLLGDELIPGQVLGIHSARTLRGHRFMGEAEFTIDSADQYPQILLERGKVVADYDARKAKIKADAEEAARKIGGNADLSDSLLEEVTSLVEWPVVLTAKFEEKFLAVPSEALVYTMKGDQKYFPVYDNSGNLLPNFIFVANIESKDPQQIISGNEKVVRPRLADAEFFFNTDRKKRLEDHLPRLETVLFQQQLGTLRDKTDRIQALAGWVAGQIGADVNHATRAGLLSKCDLMTNMVFEFTDTQGVMGMHYARHDGEAEDVAVALNEQYQPRFAGDELPSSAVACALAIADKMDTLAGIFGIGQHPKGDKDPFALRRAALGVLRIIVEKRLPLDLQTLTEEAVRLYGAKLTNANVVDDVIEFMLGRFRAWYQEEGHSVDTIQAVLARRPTRPADFDARVKAVSHFRSLDAAAALAAANKRVSNILAKSTDTLNESVNAAVLKDAAEITLATHLVVLRDKLTPLFAEGRYQEALVELASLREPVDAFFDQVMVMAEDEQVRVNRLTLLSQLRELFLQVADISVLQ</sequence>
<dbReference type="EC" id="6.1.1.14" evidence="1"/>
<dbReference type="EMBL" id="CP001657">
    <property type="protein sequence ID" value="ACT15181.1"/>
    <property type="molecule type" value="Genomic_DNA"/>
</dbReference>
<dbReference type="RefSeq" id="WP_015842253.1">
    <property type="nucleotide sequence ID" value="NC_012917.1"/>
</dbReference>
<dbReference type="SMR" id="C6DII7"/>
<dbReference type="STRING" id="561230.PC1_4167"/>
<dbReference type="KEGG" id="pct:PC1_4167"/>
<dbReference type="eggNOG" id="COG0751">
    <property type="taxonomic scope" value="Bacteria"/>
</dbReference>
<dbReference type="HOGENOM" id="CLU_007220_2_2_6"/>
<dbReference type="OrthoDB" id="9775440at2"/>
<dbReference type="Proteomes" id="UP000002736">
    <property type="component" value="Chromosome"/>
</dbReference>
<dbReference type="GO" id="GO:0005829">
    <property type="term" value="C:cytosol"/>
    <property type="evidence" value="ECO:0007669"/>
    <property type="project" value="TreeGrafter"/>
</dbReference>
<dbReference type="GO" id="GO:0004814">
    <property type="term" value="F:arginine-tRNA ligase activity"/>
    <property type="evidence" value="ECO:0007669"/>
    <property type="project" value="InterPro"/>
</dbReference>
<dbReference type="GO" id="GO:0005524">
    <property type="term" value="F:ATP binding"/>
    <property type="evidence" value="ECO:0007669"/>
    <property type="project" value="UniProtKB-UniRule"/>
</dbReference>
<dbReference type="GO" id="GO:0004820">
    <property type="term" value="F:glycine-tRNA ligase activity"/>
    <property type="evidence" value="ECO:0007669"/>
    <property type="project" value="UniProtKB-UniRule"/>
</dbReference>
<dbReference type="GO" id="GO:0006420">
    <property type="term" value="P:arginyl-tRNA aminoacylation"/>
    <property type="evidence" value="ECO:0007669"/>
    <property type="project" value="InterPro"/>
</dbReference>
<dbReference type="GO" id="GO:0006426">
    <property type="term" value="P:glycyl-tRNA aminoacylation"/>
    <property type="evidence" value="ECO:0007669"/>
    <property type="project" value="UniProtKB-UniRule"/>
</dbReference>
<dbReference type="HAMAP" id="MF_00255">
    <property type="entry name" value="Gly_tRNA_synth_beta"/>
    <property type="match status" value="1"/>
</dbReference>
<dbReference type="InterPro" id="IPR008909">
    <property type="entry name" value="DALR_anticod-bd"/>
</dbReference>
<dbReference type="InterPro" id="IPR015944">
    <property type="entry name" value="Gly-tRNA-synth_bsu"/>
</dbReference>
<dbReference type="InterPro" id="IPR006194">
    <property type="entry name" value="Gly-tRNA-synth_heterodimer"/>
</dbReference>
<dbReference type="NCBIfam" id="TIGR00211">
    <property type="entry name" value="glyS"/>
    <property type="match status" value="1"/>
</dbReference>
<dbReference type="PANTHER" id="PTHR30075:SF2">
    <property type="entry name" value="GLYCINE--TRNA LIGASE, CHLOROPLASTIC_MITOCHONDRIAL 2"/>
    <property type="match status" value="1"/>
</dbReference>
<dbReference type="PANTHER" id="PTHR30075">
    <property type="entry name" value="GLYCYL-TRNA SYNTHETASE"/>
    <property type="match status" value="1"/>
</dbReference>
<dbReference type="Pfam" id="PF05746">
    <property type="entry name" value="DALR_1"/>
    <property type="match status" value="1"/>
</dbReference>
<dbReference type="Pfam" id="PF02092">
    <property type="entry name" value="tRNA_synt_2f"/>
    <property type="match status" value="1"/>
</dbReference>
<dbReference type="PRINTS" id="PR01045">
    <property type="entry name" value="TRNASYNTHGB"/>
</dbReference>
<dbReference type="SUPFAM" id="SSF109604">
    <property type="entry name" value="HD-domain/PDEase-like"/>
    <property type="match status" value="1"/>
</dbReference>
<dbReference type="PROSITE" id="PS50861">
    <property type="entry name" value="AA_TRNA_LIGASE_II_GLYAB"/>
    <property type="match status" value="1"/>
</dbReference>
<protein>
    <recommendedName>
        <fullName evidence="1">Glycine--tRNA ligase beta subunit</fullName>
        <ecNumber evidence="1">6.1.1.14</ecNumber>
    </recommendedName>
    <alternativeName>
        <fullName evidence="1">Glycyl-tRNA synthetase beta subunit</fullName>
        <shortName evidence="1">GlyRS</shortName>
    </alternativeName>
</protein>
<proteinExistence type="inferred from homology"/>
<reference key="1">
    <citation type="submission" date="2009-07" db="EMBL/GenBank/DDBJ databases">
        <title>Complete sequence of Pectobacterium carotovorum subsp. carotovorum PC1.</title>
        <authorList>
            <consortium name="US DOE Joint Genome Institute"/>
            <person name="Lucas S."/>
            <person name="Copeland A."/>
            <person name="Lapidus A."/>
            <person name="Glavina del Rio T."/>
            <person name="Tice H."/>
            <person name="Bruce D."/>
            <person name="Goodwin L."/>
            <person name="Pitluck S."/>
            <person name="Munk A.C."/>
            <person name="Brettin T."/>
            <person name="Detter J.C."/>
            <person name="Han C."/>
            <person name="Tapia R."/>
            <person name="Larimer F."/>
            <person name="Land M."/>
            <person name="Hauser L."/>
            <person name="Kyrpides N."/>
            <person name="Mikhailova N."/>
            <person name="Balakrishnan V."/>
            <person name="Glasner J."/>
            <person name="Perna N.T."/>
        </authorList>
    </citation>
    <scope>NUCLEOTIDE SEQUENCE [LARGE SCALE GENOMIC DNA]</scope>
    <source>
        <strain>PC1</strain>
    </source>
</reference>
<keyword id="KW-0030">Aminoacyl-tRNA synthetase</keyword>
<keyword id="KW-0067">ATP-binding</keyword>
<keyword id="KW-0963">Cytoplasm</keyword>
<keyword id="KW-0436">Ligase</keyword>
<keyword id="KW-0547">Nucleotide-binding</keyword>
<keyword id="KW-0648">Protein biosynthesis</keyword>
<gene>
    <name evidence="1" type="primary">glyS</name>
    <name type="ordered locus">PC1_4167</name>
</gene>
<feature type="chain" id="PRO_1000204608" description="Glycine--tRNA ligase beta subunit">
    <location>
        <begin position="1"/>
        <end position="689"/>
    </location>
</feature>
<comment type="catalytic activity">
    <reaction evidence="1">
        <text>tRNA(Gly) + glycine + ATP = glycyl-tRNA(Gly) + AMP + diphosphate</text>
        <dbReference type="Rhea" id="RHEA:16013"/>
        <dbReference type="Rhea" id="RHEA-COMP:9664"/>
        <dbReference type="Rhea" id="RHEA-COMP:9683"/>
        <dbReference type="ChEBI" id="CHEBI:30616"/>
        <dbReference type="ChEBI" id="CHEBI:33019"/>
        <dbReference type="ChEBI" id="CHEBI:57305"/>
        <dbReference type="ChEBI" id="CHEBI:78442"/>
        <dbReference type="ChEBI" id="CHEBI:78522"/>
        <dbReference type="ChEBI" id="CHEBI:456215"/>
        <dbReference type="EC" id="6.1.1.14"/>
    </reaction>
</comment>
<comment type="subunit">
    <text evidence="1">Tetramer of two alpha and two beta subunits.</text>
</comment>
<comment type="subcellular location">
    <subcellularLocation>
        <location evidence="1">Cytoplasm</location>
    </subcellularLocation>
</comment>
<comment type="similarity">
    <text evidence="1">Belongs to the class-II aminoacyl-tRNA synthetase family.</text>
</comment>
<name>SYGB_PECCP</name>
<organism>
    <name type="scientific">Pectobacterium carotovorum subsp. carotovorum (strain PC1)</name>
    <dbReference type="NCBI Taxonomy" id="561230"/>
    <lineage>
        <taxon>Bacteria</taxon>
        <taxon>Pseudomonadati</taxon>
        <taxon>Pseudomonadota</taxon>
        <taxon>Gammaproteobacteria</taxon>
        <taxon>Enterobacterales</taxon>
        <taxon>Pectobacteriaceae</taxon>
        <taxon>Pectobacterium</taxon>
    </lineage>
</organism>
<accession>C6DII7</accession>
<evidence type="ECO:0000255" key="1">
    <source>
        <dbReference type="HAMAP-Rule" id="MF_00255"/>
    </source>
</evidence>